<proteinExistence type="evidence at transcript level"/>
<organism>
    <name type="scientific">Gallus gallus</name>
    <name type="common">Chicken</name>
    <dbReference type="NCBI Taxonomy" id="9031"/>
    <lineage>
        <taxon>Eukaryota</taxon>
        <taxon>Metazoa</taxon>
        <taxon>Chordata</taxon>
        <taxon>Craniata</taxon>
        <taxon>Vertebrata</taxon>
        <taxon>Euteleostomi</taxon>
        <taxon>Archelosauria</taxon>
        <taxon>Archosauria</taxon>
        <taxon>Dinosauria</taxon>
        <taxon>Saurischia</taxon>
        <taxon>Theropoda</taxon>
        <taxon>Coelurosauria</taxon>
        <taxon>Aves</taxon>
        <taxon>Neognathae</taxon>
        <taxon>Galloanserae</taxon>
        <taxon>Galliformes</taxon>
        <taxon>Phasianidae</taxon>
        <taxon>Phasianinae</taxon>
        <taxon>Gallus</taxon>
    </lineage>
</organism>
<name>SDC3_CHICK</name>
<feature type="signal peptide" evidence="1">
    <location>
        <begin position="1"/>
        <end position="22"/>
    </location>
</feature>
<feature type="chain" id="PRO_0000033507" description="Syndecan-3">
    <location>
        <begin position="23"/>
        <end position="405"/>
    </location>
</feature>
<feature type="topological domain" description="Extracellular" evidence="1">
    <location>
        <begin position="23"/>
        <end position="347"/>
    </location>
</feature>
<feature type="transmembrane region" description="Helical" evidence="1">
    <location>
        <begin position="348"/>
        <end position="372"/>
    </location>
</feature>
<feature type="topological domain" description="Cytoplasmic" evidence="1">
    <location>
        <begin position="373"/>
        <end position="405"/>
    </location>
</feature>
<feature type="region of interest" description="Disordered" evidence="2">
    <location>
        <begin position="31"/>
        <end position="59"/>
    </location>
</feature>
<feature type="region of interest" description="Disordered" evidence="2">
    <location>
        <begin position="134"/>
        <end position="159"/>
    </location>
</feature>
<feature type="region of interest" description="Disordered" evidence="2">
    <location>
        <begin position="191"/>
        <end position="301"/>
    </location>
</feature>
<feature type="compositionally biased region" description="Acidic residues" evidence="2">
    <location>
        <begin position="38"/>
        <end position="52"/>
    </location>
</feature>
<feature type="compositionally biased region" description="Low complexity" evidence="2">
    <location>
        <begin position="191"/>
        <end position="201"/>
    </location>
</feature>
<feature type="compositionally biased region" description="Polar residues" evidence="2">
    <location>
        <begin position="202"/>
        <end position="237"/>
    </location>
</feature>
<feature type="site" description="Cleavage of ectodomain" evidence="1">
    <location>
        <begin position="346"/>
        <end position="347"/>
    </location>
</feature>
<feature type="glycosylation site" description="O-linked (Xyl...) (glycosaminoglycan) serine" evidence="1">
    <location>
        <position position="39"/>
    </location>
</feature>
<feature type="glycosylation site" description="O-linked (Xyl...) (glycosaminoglycan) serine" evidence="1">
    <location>
        <position position="55"/>
    </location>
</feature>
<feature type="glycosylation site" description="O-linked (Xyl...) (glycosaminoglycan) serine" evidence="1">
    <location>
        <position position="57"/>
    </location>
</feature>
<feature type="glycosylation site" description="O-linked (Xyl...) (glycosaminoglycan) serine" evidence="1">
    <location>
        <position position="59"/>
    </location>
</feature>
<feature type="glycosylation site" description="O-linked (Xyl...) (glycosaminoglycan) serine" evidence="1">
    <location>
        <position position="66"/>
    </location>
</feature>
<feature type="glycosylation site" description="O-linked (Xyl...) (glycosaminoglycan) serine" evidence="1">
    <location>
        <position position="280"/>
    </location>
</feature>
<feature type="glycosylation site" description="O-linked (Xyl...) (glycosaminoglycan) serine" evidence="1">
    <location>
        <position position="283"/>
    </location>
</feature>
<feature type="glycosylation site" description="O-linked (Xyl...) (glycosaminoglycan) serine" evidence="1">
    <location>
        <position position="330"/>
    </location>
</feature>
<accession>P26261</accession>
<gene>
    <name type="primary">SDC3</name>
</gene>
<dbReference type="EMBL" id="M84910">
    <property type="protein sequence ID" value="AAA82104.1"/>
    <property type="molecule type" value="mRNA"/>
</dbReference>
<dbReference type="PIR" id="A44146">
    <property type="entry name" value="A44146"/>
</dbReference>
<dbReference type="RefSeq" id="NP_990714.1">
    <property type="nucleotide sequence ID" value="NM_205383.1"/>
</dbReference>
<dbReference type="SMR" id="P26261"/>
<dbReference type="FunCoup" id="P26261">
    <property type="interactions" value="114"/>
</dbReference>
<dbReference type="STRING" id="9031.ENSGALP00000051243"/>
<dbReference type="GlyCosmos" id="P26261">
    <property type="glycosylation" value="8 sites, No reported glycans"/>
</dbReference>
<dbReference type="GlyGen" id="P26261">
    <property type="glycosylation" value="8 sites"/>
</dbReference>
<dbReference type="PaxDb" id="9031-ENSGALP00000000792"/>
<dbReference type="GeneID" id="396343"/>
<dbReference type="KEGG" id="gga:396343"/>
<dbReference type="CTD" id="9672"/>
<dbReference type="VEuPathDB" id="HostDB:geneid_396343"/>
<dbReference type="eggNOG" id="ENOG502QTD2">
    <property type="taxonomic scope" value="Eukaryota"/>
</dbReference>
<dbReference type="InParanoid" id="P26261"/>
<dbReference type="OrthoDB" id="10044468at2759"/>
<dbReference type="PhylomeDB" id="P26261"/>
<dbReference type="PRO" id="PR:P26261"/>
<dbReference type="Proteomes" id="UP000000539">
    <property type="component" value="Unassembled WGS sequence"/>
</dbReference>
<dbReference type="GO" id="GO:0009986">
    <property type="term" value="C:cell surface"/>
    <property type="evidence" value="ECO:0000318"/>
    <property type="project" value="GO_Central"/>
</dbReference>
<dbReference type="GO" id="GO:0005886">
    <property type="term" value="C:plasma membrane"/>
    <property type="evidence" value="ECO:0000250"/>
    <property type="project" value="UniProtKB"/>
</dbReference>
<dbReference type="GO" id="GO:0019838">
    <property type="term" value="F:growth factor binding"/>
    <property type="evidence" value="ECO:0000304"/>
    <property type="project" value="AgBase"/>
</dbReference>
<dbReference type="GO" id="GO:0030154">
    <property type="term" value="P:cell differentiation"/>
    <property type="evidence" value="ECO:0007669"/>
    <property type="project" value="UniProtKB-KW"/>
</dbReference>
<dbReference type="GO" id="GO:0016477">
    <property type="term" value="P:cell migration"/>
    <property type="evidence" value="ECO:0000318"/>
    <property type="project" value="GO_Central"/>
</dbReference>
<dbReference type="GO" id="GO:0035988">
    <property type="term" value="P:chondrocyte proliferation"/>
    <property type="evidence" value="ECO:0000315"/>
    <property type="project" value="AgBase"/>
</dbReference>
<dbReference type="GO" id="GO:0003419">
    <property type="term" value="P:growth plate cartilage chondrocyte proliferation"/>
    <property type="evidence" value="ECO:0000304"/>
    <property type="project" value="AgBase"/>
</dbReference>
<dbReference type="GO" id="GO:1900026">
    <property type="term" value="P:positive regulation of substrate adhesion-dependent cell spreading"/>
    <property type="evidence" value="ECO:0000315"/>
    <property type="project" value="AgBase"/>
</dbReference>
<dbReference type="InterPro" id="IPR003585">
    <property type="entry name" value="Neurexin-like"/>
</dbReference>
<dbReference type="InterPro" id="IPR001050">
    <property type="entry name" value="Syndecan"/>
</dbReference>
<dbReference type="InterPro" id="IPR027789">
    <property type="entry name" value="Syndecan/Neurexin_dom"/>
</dbReference>
<dbReference type="InterPro" id="IPR030479">
    <property type="entry name" value="Syndecan_CS"/>
</dbReference>
<dbReference type="PANTHER" id="PTHR10915">
    <property type="entry name" value="SYNDECAN"/>
    <property type="match status" value="1"/>
</dbReference>
<dbReference type="PANTHER" id="PTHR10915:SF7">
    <property type="entry name" value="SYNDECAN-3"/>
    <property type="match status" value="1"/>
</dbReference>
<dbReference type="Pfam" id="PF01034">
    <property type="entry name" value="Syndecan"/>
    <property type="match status" value="1"/>
</dbReference>
<dbReference type="SMART" id="SM00294">
    <property type="entry name" value="4.1m"/>
    <property type="match status" value="1"/>
</dbReference>
<dbReference type="PROSITE" id="PS00964">
    <property type="entry name" value="SYNDECAN"/>
    <property type="match status" value="1"/>
</dbReference>
<sequence length="405" mass="43069">MPAELRRLAVLLLLLSARAALAQPWRNENYERPVDLEGSGDDDPFGDDELDDIYSGSGSGYFEQESGLETAVSLTTDTSVPLPTTVAVLPVTLVQPMATPFELFPTEDTSPEQTTSVLYIPKITEAPVIPSWKTTTASTTASDSPSTTSTTTTTAATTTTTTTTISTTVATSKPTTTQRFLPPFVTKAATTRATTLETPTTSIPETSVLTEVTTSRLVPSSTAKPRSLPKPSTSRTAEPTEKSTALPSSPTTLPPTEAPQVEPGELTTVLDSDLEVPTSSGPSGDFEIQEEEETTRPELGNEVVAVVTPPAAPGLGKNAEPGLIDNTIESGSSAAQLPQKNILERKEVLIAVIVGGVVGALFAAFLVMLLIYRMKKKDEGSYTLEEPKQANVTYQKPDKQEEFYA</sequence>
<keyword id="KW-0217">Developmental protein</keyword>
<keyword id="KW-0221">Differentiation</keyword>
<keyword id="KW-0325">Glycoprotein</keyword>
<keyword id="KW-0357">Heparan sulfate</keyword>
<keyword id="KW-0472">Membrane</keyword>
<keyword id="KW-0654">Proteoglycan</keyword>
<keyword id="KW-1185">Reference proteome</keyword>
<keyword id="KW-0732">Signal</keyword>
<keyword id="KW-0812">Transmembrane</keyword>
<keyword id="KW-1133">Transmembrane helix</keyword>
<evidence type="ECO:0000255" key="1"/>
<evidence type="ECO:0000256" key="2">
    <source>
        <dbReference type="SAM" id="MobiDB-lite"/>
    </source>
</evidence>
<evidence type="ECO:0000305" key="3"/>
<protein>
    <recommendedName>
        <fullName>Syndecan-3</fullName>
    </recommendedName>
</protein>
<comment type="function">
    <text>Cell surface proteoglycan that may bear both heparan sulfate and chondroitin sulfate. The multiple functional domains provide potential sites for mediating the adhesive cell-matrix interactions and cytoskeletal reorganization involved in limb chondrogenesis. Interaction with other matrix ligands as well as phosphorylation and shedding of the ectodomain might be involved in cell shape changes that occur during chondrogenesis. Furthermore, shedding of the ectodomain might break the adhesive interactions that promoted condensation, thus facilitating the deposition of cartilage matrix molecules.</text>
</comment>
<comment type="subcellular location">
    <subcellularLocation>
        <location>Membrane</location>
        <topology>Single-pass type I membrane protein</topology>
    </subcellularLocation>
</comment>
<comment type="tissue specificity">
    <text>Proximal chondrogenic central core of embryonic limb buds where cartilage differentiation is being initiated.</text>
</comment>
<comment type="developmental stage">
    <text>Expressed in high amounts at the onset of limb cartilage differentiation.</text>
</comment>
<comment type="PTM">
    <text evidence="3">O-glycosylated within the Thr/Ser-rich region which could interact with lectin domains on other molecules.</text>
</comment>
<comment type="similarity">
    <text evidence="3">Belongs to the syndecan proteoglycan family.</text>
</comment>
<reference key="1">
    <citation type="journal article" date="1995" name="Dev. Biol.">
        <title>Characterization of chicken syndecan-3 as a heparan sulfate proteoglycan and its expression during embryogenesis.</title>
        <authorList>
            <person name="Gould S.E."/>
            <person name="Upholt W.B."/>
            <person name="Kosher R.A."/>
        </authorList>
    </citation>
    <scope>NUCLEOTIDE SEQUENCE [MRNA]</scope>
    <source>
        <tissue>Limb bud</tissue>
    </source>
</reference>
<reference key="2">
    <citation type="journal article" date="1992" name="Proc. Natl. Acad. Sci. U.S.A.">
        <title>Syndecan 3: a member of the syndecan family of membrane-intercalated proteoglycans that is expressed in high amounts at the onset of chicken limb cartilage differentiation.</title>
        <authorList>
            <person name="Gould S.E."/>
            <person name="Upholt W.B."/>
            <person name="Kosher R.A."/>
        </authorList>
    </citation>
    <scope>NUCLEOTIDE SEQUENCE [MRNA] OF 22-405</scope>
    <source>
        <tissue>Limb bud</tissue>
    </source>
</reference>